<evidence type="ECO:0000250" key="1"/>
<evidence type="ECO:0000250" key="2">
    <source>
        <dbReference type="UniProtKB" id="P02452"/>
    </source>
</evidence>
<evidence type="ECO:0000250" key="3">
    <source>
        <dbReference type="UniProtKB" id="P02453"/>
    </source>
</evidence>
<evidence type="ECO:0000250" key="4">
    <source>
        <dbReference type="UniProtKB" id="P02454"/>
    </source>
</evidence>
<evidence type="ECO:0000250" key="5">
    <source>
        <dbReference type="UniProtKB" id="P02457"/>
    </source>
</evidence>
<evidence type="ECO:0000250" key="6">
    <source>
        <dbReference type="UniProtKB" id="P11087"/>
    </source>
</evidence>
<evidence type="ECO:0000256" key="7">
    <source>
        <dbReference type="SAM" id="MobiDB-lite"/>
    </source>
</evidence>
<evidence type="ECO:0000305" key="8"/>
<protein>
    <recommendedName>
        <fullName>Collagen alpha-1(I) chain</fullName>
    </recommendedName>
    <alternativeName>
        <fullName>Alpha-1 type I collagen</fullName>
    </alternativeName>
</protein>
<dbReference type="PIR" id="A02856">
    <property type="entry name" value="CGRB1S"/>
</dbReference>
<dbReference type="InParanoid" id="P02456"/>
<dbReference type="Proteomes" id="UP000001811">
    <property type="component" value="Unplaced"/>
</dbReference>
<dbReference type="GO" id="GO:0005581">
    <property type="term" value="C:collagen trimer"/>
    <property type="evidence" value="ECO:0007669"/>
    <property type="project" value="UniProtKB-KW"/>
</dbReference>
<dbReference type="GO" id="GO:0005576">
    <property type="term" value="C:extracellular region"/>
    <property type="evidence" value="ECO:0007669"/>
    <property type="project" value="UniProtKB-KW"/>
</dbReference>
<dbReference type="InterPro" id="IPR008160">
    <property type="entry name" value="Collagen"/>
</dbReference>
<dbReference type="Pfam" id="PF01391">
    <property type="entry name" value="Collagen"/>
    <property type="match status" value="1"/>
</dbReference>
<proteinExistence type="evidence at protein level"/>
<feature type="chain" id="PRO_0000059397" description="Collagen alpha-1(I) chain">
    <location>
        <begin position="1"/>
        <end position="53" status="greater than"/>
    </location>
</feature>
<feature type="region of interest" description="Disordered" evidence="7">
    <location>
        <begin position="1"/>
        <end position="53"/>
    </location>
</feature>
<feature type="compositionally biased region" description="Low complexity" evidence="7">
    <location>
        <begin position="10"/>
        <end position="23"/>
    </location>
</feature>
<feature type="compositionally biased region" description="Low complexity" evidence="7">
    <location>
        <begin position="34"/>
        <end position="53"/>
    </location>
</feature>
<feature type="modified residue" description="Allysine" evidence="3">
    <location>
        <position position="7"/>
    </location>
</feature>
<feature type="modified residue" description="Phosphoserine" evidence="4">
    <location>
        <position position="8"/>
    </location>
</feature>
<feature type="modified residue" description="4-hydroxyproline" evidence="8">
    <location>
        <position position="26"/>
    </location>
</feature>
<feature type="modified residue" description="4-hydroxyproline" evidence="8">
    <location>
        <position position="29"/>
    </location>
</feature>
<feature type="modified residue" description="4-hydroxyproline" evidence="8">
    <location>
        <position position="32"/>
    </location>
</feature>
<feature type="modified residue" description="4-hydroxyproline" evidence="8">
    <location>
        <position position="41"/>
    </location>
</feature>
<feature type="modified residue" description="4-hydroxyproline" evidence="8">
    <location>
        <position position="44"/>
    </location>
</feature>
<feature type="modified residue" description="4-hydroxyproline" evidence="8">
    <location>
        <position position="47"/>
    </location>
</feature>
<feature type="non-terminal residue">
    <location>
        <position position="53"/>
    </location>
</feature>
<sequence length="53" mass="4988">SYGYBZKSAGVSVPGPMGPSGPRGLPGPPGAPGPZGFZGPPGZPGZPGSSGPM</sequence>
<accession>P02456</accession>
<name>CO1A1_RABIT</name>
<comment type="function">
    <text>Type I collagen is a member of group I collagen (fibrillar forming collagen).</text>
</comment>
<comment type="subunit">
    <text evidence="2 3 4">Trimers of one alpha 2(I) and two alpha 1(I) chains. Interacts with MRC2. Interacts with TRAM2. Interacts with MFAP4 in a Ca (2+)-dependent manner.</text>
</comment>
<comment type="subcellular location">
    <subcellularLocation>
        <location evidence="1">Secreted</location>
        <location evidence="1">Extracellular space</location>
        <location evidence="1">Extracellular matrix</location>
    </subcellularLocation>
</comment>
<comment type="tissue specificity">
    <text>Forms the fibrils of tendon, ligaments and bones. In bones the fibrils are mineralized with calcium hydroxyapatite.</text>
</comment>
<comment type="PTM">
    <text evidence="6">Contains mostly 4-hydroxyproline. Proline residues at the third position of the tripeptide repeating unit (G-X-Y) are hydroxylated in some or all of the chains.</text>
</comment>
<comment type="PTM">
    <text evidence="6">Contains 3-hydroxyproline at a few sites. This modification occurs on the first proline residue in the sequence motif Gly-Pro-Hyp, where Hyp is 4-hydroxyproline.</text>
</comment>
<comment type="PTM">
    <text evidence="5">Lysine residues at the third position of the tripeptide repeating unit (G-X-Y) are 5-hydroxylated in some or all of the chains.</text>
</comment>
<comment type="PTM">
    <text evidence="6">O-glycosylated on hydroxylated lysine residues. The O-linked glycan consists of a Glc-Gal disaccharide.</text>
</comment>
<comment type="similarity">
    <text evidence="8">Belongs to the fibrillar collagen family.</text>
</comment>
<gene>
    <name type="primary">COL1A1</name>
</gene>
<keyword id="KW-0176">Collagen</keyword>
<keyword id="KW-0903">Direct protein sequencing</keyword>
<keyword id="KW-0272">Extracellular matrix</keyword>
<keyword id="KW-0379">Hydroxylation</keyword>
<keyword id="KW-0597">Phosphoprotein</keyword>
<keyword id="KW-1185">Reference proteome</keyword>
<keyword id="KW-0677">Repeat</keyword>
<keyword id="KW-0964">Secreted</keyword>
<reference key="1">
    <citation type="journal article" date="1970" name="Arch. Biochem. Biophys.">
        <title>The comparative biochemistry of collagen: the structure of rabbit skin colllagen and its relevance to immunochemical studies of collagen.</title>
        <authorList>
            <person name="Bornstein P."/>
            <person name="Nesse R."/>
        </authorList>
    </citation>
    <scope>PROTEIN SEQUENCE</scope>
</reference>
<organism>
    <name type="scientific">Oryctolagus cuniculus</name>
    <name type="common">Rabbit</name>
    <dbReference type="NCBI Taxonomy" id="9986"/>
    <lineage>
        <taxon>Eukaryota</taxon>
        <taxon>Metazoa</taxon>
        <taxon>Chordata</taxon>
        <taxon>Craniata</taxon>
        <taxon>Vertebrata</taxon>
        <taxon>Euteleostomi</taxon>
        <taxon>Mammalia</taxon>
        <taxon>Eutheria</taxon>
        <taxon>Euarchontoglires</taxon>
        <taxon>Glires</taxon>
        <taxon>Lagomorpha</taxon>
        <taxon>Leporidae</taxon>
        <taxon>Oryctolagus</taxon>
    </lineage>
</organism>